<comment type="function">
    <text evidence="1">Required for the timely initiation of chromosomal replication via direct interactions with the DnaA initiator protein.</text>
</comment>
<comment type="subunit">
    <text evidence="1">Homotetramer; dimer of dimers.</text>
</comment>
<comment type="similarity">
    <text evidence="1">Belongs to the SIS family. DiaA subfamily.</text>
</comment>
<accession>B5REL6</accession>
<keyword id="KW-0235">DNA replication</keyword>
<gene>
    <name evidence="1" type="primary">diaA</name>
    <name type="ordered locus">SG3157</name>
</gene>
<dbReference type="EMBL" id="AM933173">
    <property type="protein sequence ID" value="CAR38956.1"/>
    <property type="molecule type" value="Genomic_DNA"/>
</dbReference>
<dbReference type="RefSeq" id="WP_000893481.1">
    <property type="nucleotide sequence ID" value="NC_011274.1"/>
</dbReference>
<dbReference type="SMR" id="B5REL6"/>
<dbReference type="GeneID" id="66757607"/>
<dbReference type="KEGG" id="seg:SG3157"/>
<dbReference type="HOGENOM" id="CLU_080999_3_1_6"/>
<dbReference type="Proteomes" id="UP000008321">
    <property type="component" value="Chromosome"/>
</dbReference>
<dbReference type="GO" id="GO:0097367">
    <property type="term" value="F:carbohydrate derivative binding"/>
    <property type="evidence" value="ECO:0007669"/>
    <property type="project" value="InterPro"/>
</dbReference>
<dbReference type="GO" id="GO:1901135">
    <property type="term" value="P:carbohydrate derivative metabolic process"/>
    <property type="evidence" value="ECO:0007669"/>
    <property type="project" value="InterPro"/>
</dbReference>
<dbReference type="GO" id="GO:0006260">
    <property type="term" value="P:DNA replication"/>
    <property type="evidence" value="ECO:0007669"/>
    <property type="project" value="UniProtKB-UniRule"/>
</dbReference>
<dbReference type="CDD" id="cd05006">
    <property type="entry name" value="SIS_GmhA"/>
    <property type="match status" value="1"/>
</dbReference>
<dbReference type="FunFam" id="3.40.50.10490:FF:000006">
    <property type="entry name" value="DnaA initiator-associating protein DiaA"/>
    <property type="match status" value="1"/>
</dbReference>
<dbReference type="Gene3D" id="3.40.50.10490">
    <property type="entry name" value="Glucose-6-phosphate isomerase like protein, domain 1"/>
    <property type="match status" value="1"/>
</dbReference>
<dbReference type="HAMAP" id="MF_01157">
    <property type="entry name" value="SIS_DiaA"/>
    <property type="match status" value="1"/>
</dbReference>
<dbReference type="InterPro" id="IPR023070">
    <property type="entry name" value="DiaA"/>
</dbReference>
<dbReference type="InterPro" id="IPR035461">
    <property type="entry name" value="GmhA/DiaA"/>
</dbReference>
<dbReference type="InterPro" id="IPR001347">
    <property type="entry name" value="SIS_dom"/>
</dbReference>
<dbReference type="InterPro" id="IPR046348">
    <property type="entry name" value="SIS_dom_sf"/>
</dbReference>
<dbReference type="InterPro" id="IPR050099">
    <property type="entry name" value="SIS_GmhA/DiaA_subfam"/>
</dbReference>
<dbReference type="NCBIfam" id="NF008138">
    <property type="entry name" value="PRK10886.1"/>
    <property type="match status" value="1"/>
</dbReference>
<dbReference type="PANTHER" id="PTHR30390:SF6">
    <property type="entry name" value="DNAA INITIATOR-ASSOCIATING PROTEIN DIAA"/>
    <property type="match status" value="1"/>
</dbReference>
<dbReference type="PANTHER" id="PTHR30390">
    <property type="entry name" value="SEDOHEPTULOSE 7-PHOSPHATE ISOMERASE / DNAA INITIATOR-ASSOCIATING FACTOR FOR REPLICATION INITIATION"/>
    <property type="match status" value="1"/>
</dbReference>
<dbReference type="Pfam" id="PF13580">
    <property type="entry name" value="SIS_2"/>
    <property type="match status" value="1"/>
</dbReference>
<dbReference type="SUPFAM" id="SSF53697">
    <property type="entry name" value="SIS domain"/>
    <property type="match status" value="1"/>
</dbReference>
<dbReference type="PROSITE" id="PS51464">
    <property type="entry name" value="SIS"/>
    <property type="match status" value="1"/>
</dbReference>
<reference key="1">
    <citation type="journal article" date="2008" name="Genome Res.">
        <title>Comparative genome analysis of Salmonella enteritidis PT4 and Salmonella gallinarum 287/91 provides insights into evolutionary and host adaptation pathways.</title>
        <authorList>
            <person name="Thomson N.R."/>
            <person name="Clayton D.J."/>
            <person name="Windhorst D."/>
            <person name="Vernikos G."/>
            <person name="Davidson S."/>
            <person name="Churcher C."/>
            <person name="Quail M.A."/>
            <person name="Stevens M."/>
            <person name="Jones M.A."/>
            <person name="Watson M."/>
            <person name="Barron A."/>
            <person name="Layton A."/>
            <person name="Pickard D."/>
            <person name="Kingsley R.A."/>
            <person name="Bignell A."/>
            <person name="Clark L."/>
            <person name="Harris B."/>
            <person name="Ormond D."/>
            <person name="Abdellah Z."/>
            <person name="Brooks K."/>
            <person name="Cherevach I."/>
            <person name="Chillingworth T."/>
            <person name="Woodward J."/>
            <person name="Norberczak H."/>
            <person name="Lord A."/>
            <person name="Arrowsmith C."/>
            <person name="Jagels K."/>
            <person name="Moule S."/>
            <person name="Mungall K."/>
            <person name="Saunders M."/>
            <person name="Whitehead S."/>
            <person name="Chabalgoity J.A."/>
            <person name="Maskell D."/>
            <person name="Humphreys T."/>
            <person name="Roberts M."/>
            <person name="Barrow P.A."/>
            <person name="Dougan G."/>
            <person name="Parkhill J."/>
        </authorList>
    </citation>
    <scope>NUCLEOTIDE SEQUENCE [LARGE SCALE GENOMIC DNA]</scope>
    <source>
        <strain>287/91 / NCTC 13346</strain>
    </source>
</reference>
<evidence type="ECO:0000255" key="1">
    <source>
        <dbReference type="HAMAP-Rule" id="MF_01157"/>
    </source>
</evidence>
<sequence>MLERIKVCFTESIQTQIAAAEALPDAISRAAMTLVHSLLNGNKILCCGNGTSAANAQHFAASMINRFETERPSLPAIALNTDNVVLTAIANDRLHDEVYAKQVRALGHAGDVLLAISTRGNSRDIVKAVEAAVTRDMTIVALTGYDGGELAGLLGPQDVEIRIPSHHSARIQEMHMLTVNCLCDLIDNTLFPHQDD</sequence>
<organism>
    <name type="scientific">Salmonella gallinarum (strain 287/91 / NCTC 13346)</name>
    <dbReference type="NCBI Taxonomy" id="550538"/>
    <lineage>
        <taxon>Bacteria</taxon>
        <taxon>Pseudomonadati</taxon>
        <taxon>Pseudomonadota</taxon>
        <taxon>Gammaproteobacteria</taxon>
        <taxon>Enterobacterales</taxon>
        <taxon>Enterobacteriaceae</taxon>
        <taxon>Salmonella</taxon>
    </lineage>
</organism>
<protein>
    <recommendedName>
        <fullName evidence="1">DnaA initiator-associating protein DiaA</fullName>
    </recommendedName>
</protein>
<name>DIAA_SALG2</name>
<feature type="chain" id="PRO_1000137798" description="DnaA initiator-associating protein DiaA">
    <location>
        <begin position="1"/>
        <end position="196"/>
    </location>
</feature>
<feature type="domain" description="SIS" evidence="1">
    <location>
        <begin position="34"/>
        <end position="196"/>
    </location>
</feature>
<proteinExistence type="inferred from homology"/>